<sequence length="85" mass="9929">MKAGIHPDYRKVVFHDTTVDHYFVVGSTLQTDRTIEWEGKTYPYITIEVSSESHPFYTGKQRVVQKEGRVANFTRRFGQFAKESK</sequence>
<evidence type="ECO:0000255" key="1">
    <source>
        <dbReference type="HAMAP-Rule" id="MF_00502"/>
    </source>
</evidence>
<evidence type="ECO:0000305" key="2"/>
<gene>
    <name evidence="1" type="primary">rpmE2</name>
    <name type="ordered locus">VCM66_0835</name>
</gene>
<accession>C3LTC8</accession>
<organism>
    <name type="scientific">Vibrio cholerae serotype O1 (strain M66-2)</name>
    <dbReference type="NCBI Taxonomy" id="579112"/>
    <lineage>
        <taxon>Bacteria</taxon>
        <taxon>Pseudomonadati</taxon>
        <taxon>Pseudomonadota</taxon>
        <taxon>Gammaproteobacteria</taxon>
        <taxon>Vibrionales</taxon>
        <taxon>Vibrionaceae</taxon>
        <taxon>Vibrio</taxon>
    </lineage>
</organism>
<dbReference type="EMBL" id="CP001233">
    <property type="protein sequence ID" value="ACP05154.1"/>
    <property type="molecule type" value="Genomic_DNA"/>
</dbReference>
<dbReference type="RefSeq" id="WP_000643440.1">
    <property type="nucleotide sequence ID" value="NC_012578.1"/>
</dbReference>
<dbReference type="SMR" id="C3LTC8"/>
<dbReference type="KEGG" id="vcm:VCM66_0835"/>
<dbReference type="HOGENOM" id="CLU_114306_2_1_6"/>
<dbReference type="Proteomes" id="UP000001217">
    <property type="component" value="Chromosome I"/>
</dbReference>
<dbReference type="GO" id="GO:1990904">
    <property type="term" value="C:ribonucleoprotein complex"/>
    <property type="evidence" value="ECO:0007669"/>
    <property type="project" value="UniProtKB-KW"/>
</dbReference>
<dbReference type="GO" id="GO:0005840">
    <property type="term" value="C:ribosome"/>
    <property type="evidence" value="ECO:0007669"/>
    <property type="project" value="UniProtKB-KW"/>
</dbReference>
<dbReference type="GO" id="GO:0003735">
    <property type="term" value="F:structural constituent of ribosome"/>
    <property type="evidence" value="ECO:0007669"/>
    <property type="project" value="InterPro"/>
</dbReference>
<dbReference type="GO" id="GO:0006412">
    <property type="term" value="P:translation"/>
    <property type="evidence" value="ECO:0007669"/>
    <property type="project" value="UniProtKB-UniRule"/>
</dbReference>
<dbReference type="Gene3D" id="4.10.830.30">
    <property type="entry name" value="Ribosomal protein L31"/>
    <property type="match status" value="1"/>
</dbReference>
<dbReference type="HAMAP" id="MF_00502">
    <property type="entry name" value="Ribosomal_bL31_2"/>
    <property type="match status" value="1"/>
</dbReference>
<dbReference type="InterPro" id="IPR034704">
    <property type="entry name" value="Ribosomal_bL28/bL31-like_sf"/>
</dbReference>
<dbReference type="InterPro" id="IPR002150">
    <property type="entry name" value="Ribosomal_bL31"/>
</dbReference>
<dbReference type="InterPro" id="IPR027493">
    <property type="entry name" value="Ribosomal_bL31_B"/>
</dbReference>
<dbReference type="InterPro" id="IPR042105">
    <property type="entry name" value="Ribosomal_bL31_sf"/>
</dbReference>
<dbReference type="NCBIfam" id="TIGR00105">
    <property type="entry name" value="L31"/>
    <property type="match status" value="1"/>
</dbReference>
<dbReference type="NCBIfam" id="NF002462">
    <property type="entry name" value="PRK01678.1"/>
    <property type="match status" value="1"/>
</dbReference>
<dbReference type="PANTHER" id="PTHR33280">
    <property type="entry name" value="50S RIBOSOMAL PROTEIN L31, CHLOROPLASTIC"/>
    <property type="match status" value="1"/>
</dbReference>
<dbReference type="PANTHER" id="PTHR33280:SF1">
    <property type="entry name" value="LARGE RIBOSOMAL SUBUNIT PROTEIN BL31C"/>
    <property type="match status" value="1"/>
</dbReference>
<dbReference type="Pfam" id="PF01197">
    <property type="entry name" value="Ribosomal_L31"/>
    <property type="match status" value="1"/>
</dbReference>
<dbReference type="PRINTS" id="PR01249">
    <property type="entry name" value="RIBOSOMALL31"/>
</dbReference>
<dbReference type="SUPFAM" id="SSF143800">
    <property type="entry name" value="L28p-like"/>
    <property type="match status" value="1"/>
</dbReference>
<dbReference type="PROSITE" id="PS01143">
    <property type="entry name" value="RIBOSOMAL_L31"/>
    <property type="match status" value="1"/>
</dbReference>
<comment type="subunit">
    <text evidence="1">Part of the 50S ribosomal subunit.</text>
</comment>
<comment type="similarity">
    <text evidence="1">Belongs to the bacterial ribosomal protein bL31 family. Type B subfamily.</text>
</comment>
<protein>
    <recommendedName>
        <fullName evidence="1">Large ribosomal subunit protein bL31B</fullName>
    </recommendedName>
    <alternativeName>
        <fullName evidence="2">50S ribosomal protein L31 type B</fullName>
    </alternativeName>
</protein>
<name>RL31B_VIBCM</name>
<reference key="1">
    <citation type="journal article" date="2008" name="PLoS ONE">
        <title>A recalibrated molecular clock and independent origins for the cholera pandemic clones.</title>
        <authorList>
            <person name="Feng L."/>
            <person name="Reeves P.R."/>
            <person name="Lan R."/>
            <person name="Ren Y."/>
            <person name="Gao C."/>
            <person name="Zhou Z."/>
            <person name="Ren Y."/>
            <person name="Cheng J."/>
            <person name="Wang W."/>
            <person name="Wang J."/>
            <person name="Qian W."/>
            <person name="Li D."/>
            <person name="Wang L."/>
        </authorList>
    </citation>
    <scope>NUCLEOTIDE SEQUENCE [LARGE SCALE GENOMIC DNA]</scope>
    <source>
        <strain>M66-2</strain>
    </source>
</reference>
<proteinExistence type="inferred from homology"/>
<feature type="chain" id="PRO_1000177000" description="Large ribosomal subunit protein bL31B">
    <location>
        <begin position="1"/>
        <end position="85"/>
    </location>
</feature>
<keyword id="KW-0687">Ribonucleoprotein</keyword>
<keyword id="KW-0689">Ribosomal protein</keyword>